<evidence type="ECO:0000255" key="1">
    <source>
        <dbReference type="HAMAP-Rule" id="MF_00060"/>
    </source>
</evidence>
<feature type="chain" id="PRO_1000091984" description="5'-nucleotidase SurE">
    <location>
        <begin position="1"/>
        <end position="254"/>
    </location>
</feature>
<feature type="binding site" evidence="1">
    <location>
        <position position="8"/>
    </location>
    <ligand>
        <name>a divalent metal cation</name>
        <dbReference type="ChEBI" id="CHEBI:60240"/>
    </ligand>
</feature>
<feature type="binding site" evidence="1">
    <location>
        <position position="9"/>
    </location>
    <ligand>
        <name>a divalent metal cation</name>
        <dbReference type="ChEBI" id="CHEBI:60240"/>
    </ligand>
</feature>
<feature type="binding site" evidence="1">
    <location>
        <position position="38"/>
    </location>
    <ligand>
        <name>a divalent metal cation</name>
        <dbReference type="ChEBI" id="CHEBI:60240"/>
    </ligand>
</feature>
<feature type="binding site" evidence="1">
    <location>
        <position position="91"/>
    </location>
    <ligand>
        <name>a divalent metal cation</name>
        <dbReference type="ChEBI" id="CHEBI:60240"/>
    </ligand>
</feature>
<reference key="1">
    <citation type="submission" date="2008-08" db="EMBL/GenBank/DDBJ databases">
        <title>Complete sequence of Anaeromyxobacter sp. K.</title>
        <authorList>
            <consortium name="US DOE Joint Genome Institute"/>
            <person name="Lucas S."/>
            <person name="Copeland A."/>
            <person name="Lapidus A."/>
            <person name="Glavina del Rio T."/>
            <person name="Dalin E."/>
            <person name="Tice H."/>
            <person name="Bruce D."/>
            <person name="Goodwin L."/>
            <person name="Pitluck S."/>
            <person name="Saunders E."/>
            <person name="Brettin T."/>
            <person name="Detter J.C."/>
            <person name="Han C."/>
            <person name="Larimer F."/>
            <person name="Land M."/>
            <person name="Hauser L."/>
            <person name="Kyrpides N."/>
            <person name="Ovchinnikiva G."/>
            <person name="Beliaev A."/>
        </authorList>
    </citation>
    <scope>NUCLEOTIDE SEQUENCE [LARGE SCALE GENOMIC DNA]</scope>
    <source>
        <strain>K</strain>
    </source>
</reference>
<organism>
    <name type="scientific">Anaeromyxobacter sp. (strain K)</name>
    <dbReference type="NCBI Taxonomy" id="447217"/>
    <lineage>
        <taxon>Bacteria</taxon>
        <taxon>Pseudomonadati</taxon>
        <taxon>Myxococcota</taxon>
        <taxon>Myxococcia</taxon>
        <taxon>Myxococcales</taxon>
        <taxon>Cystobacterineae</taxon>
        <taxon>Anaeromyxobacteraceae</taxon>
        <taxon>Anaeromyxobacter</taxon>
    </lineage>
</organism>
<accession>B4UE89</accession>
<sequence>MRVLLSNDDGVHAAGLKALADAFHGDEVWVVAPDREQSASSHAISLHRPLRLLEVAPRWYAVDGTPTDAVYMGLNLVLRDARPDVVVSGVNHGPNLGNDVLYSGTVAAAMEGALLGVNAVAVSLAAPPPHDFGEAARFAAALARQVVARPPPAPVLLNVNVPPGPVRGYRFARLGRRTYGNEVVEKTDPRGRKYYWIGGEGRVHNEDIPGSDCNTVLLERLAAVTPLHLDGTHDPMFQELRSWTVPGYEKEPAP</sequence>
<gene>
    <name evidence="1" type="primary">surE</name>
    <name type="ordered locus">AnaeK_0800</name>
</gene>
<keyword id="KW-0963">Cytoplasm</keyword>
<keyword id="KW-0378">Hydrolase</keyword>
<keyword id="KW-0479">Metal-binding</keyword>
<keyword id="KW-0547">Nucleotide-binding</keyword>
<comment type="function">
    <text evidence="1">Nucleotidase that shows phosphatase activity on nucleoside 5'-monophosphates.</text>
</comment>
<comment type="catalytic activity">
    <reaction evidence="1">
        <text>a ribonucleoside 5'-phosphate + H2O = a ribonucleoside + phosphate</text>
        <dbReference type="Rhea" id="RHEA:12484"/>
        <dbReference type="ChEBI" id="CHEBI:15377"/>
        <dbReference type="ChEBI" id="CHEBI:18254"/>
        <dbReference type="ChEBI" id="CHEBI:43474"/>
        <dbReference type="ChEBI" id="CHEBI:58043"/>
        <dbReference type="EC" id="3.1.3.5"/>
    </reaction>
</comment>
<comment type="cofactor">
    <cofactor evidence="1">
        <name>a divalent metal cation</name>
        <dbReference type="ChEBI" id="CHEBI:60240"/>
    </cofactor>
    <text evidence="1">Binds 1 divalent metal cation per subunit.</text>
</comment>
<comment type="subcellular location">
    <subcellularLocation>
        <location evidence="1">Cytoplasm</location>
    </subcellularLocation>
</comment>
<comment type="similarity">
    <text evidence="1">Belongs to the SurE nucleotidase family.</text>
</comment>
<dbReference type="EC" id="3.1.3.5" evidence="1"/>
<dbReference type="EMBL" id="CP001131">
    <property type="protein sequence ID" value="ACG72036.1"/>
    <property type="molecule type" value="Genomic_DNA"/>
</dbReference>
<dbReference type="RefSeq" id="WP_012524863.1">
    <property type="nucleotide sequence ID" value="NC_011145.1"/>
</dbReference>
<dbReference type="SMR" id="B4UE89"/>
<dbReference type="KEGG" id="ank:AnaeK_0800"/>
<dbReference type="HOGENOM" id="CLU_045192_1_2_7"/>
<dbReference type="OrthoDB" id="9780815at2"/>
<dbReference type="Proteomes" id="UP000001871">
    <property type="component" value="Chromosome"/>
</dbReference>
<dbReference type="GO" id="GO:0005737">
    <property type="term" value="C:cytoplasm"/>
    <property type="evidence" value="ECO:0007669"/>
    <property type="project" value="UniProtKB-SubCell"/>
</dbReference>
<dbReference type="GO" id="GO:0008254">
    <property type="term" value="F:3'-nucleotidase activity"/>
    <property type="evidence" value="ECO:0007669"/>
    <property type="project" value="TreeGrafter"/>
</dbReference>
<dbReference type="GO" id="GO:0008253">
    <property type="term" value="F:5'-nucleotidase activity"/>
    <property type="evidence" value="ECO:0007669"/>
    <property type="project" value="UniProtKB-UniRule"/>
</dbReference>
<dbReference type="GO" id="GO:0004309">
    <property type="term" value="F:exopolyphosphatase activity"/>
    <property type="evidence" value="ECO:0007669"/>
    <property type="project" value="TreeGrafter"/>
</dbReference>
<dbReference type="GO" id="GO:0046872">
    <property type="term" value="F:metal ion binding"/>
    <property type="evidence" value="ECO:0007669"/>
    <property type="project" value="UniProtKB-UniRule"/>
</dbReference>
<dbReference type="GO" id="GO:0000166">
    <property type="term" value="F:nucleotide binding"/>
    <property type="evidence" value="ECO:0007669"/>
    <property type="project" value="UniProtKB-KW"/>
</dbReference>
<dbReference type="FunFam" id="3.40.1210.10:FF:000001">
    <property type="entry name" value="5'/3'-nucleotidase SurE"/>
    <property type="match status" value="1"/>
</dbReference>
<dbReference type="Gene3D" id="3.40.1210.10">
    <property type="entry name" value="Survival protein SurE-like phosphatase/nucleotidase"/>
    <property type="match status" value="1"/>
</dbReference>
<dbReference type="HAMAP" id="MF_00060">
    <property type="entry name" value="SurE"/>
    <property type="match status" value="1"/>
</dbReference>
<dbReference type="InterPro" id="IPR030048">
    <property type="entry name" value="SurE"/>
</dbReference>
<dbReference type="InterPro" id="IPR002828">
    <property type="entry name" value="SurE-like_Pase/nucleotidase"/>
</dbReference>
<dbReference type="InterPro" id="IPR036523">
    <property type="entry name" value="SurE-like_sf"/>
</dbReference>
<dbReference type="NCBIfam" id="NF001490">
    <property type="entry name" value="PRK00346.1-4"/>
    <property type="match status" value="1"/>
</dbReference>
<dbReference type="NCBIfam" id="TIGR00087">
    <property type="entry name" value="surE"/>
    <property type="match status" value="1"/>
</dbReference>
<dbReference type="PANTHER" id="PTHR30457">
    <property type="entry name" value="5'-NUCLEOTIDASE SURE"/>
    <property type="match status" value="1"/>
</dbReference>
<dbReference type="PANTHER" id="PTHR30457:SF12">
    <property type="entry name" value="5'_3'-NUCLEOTIDASE SURE"/>
    <property type="match status" value="1"/>
</dbReference>
<dbReference type="Pfam" id="PF01975">
    <property type="entry name" value="SurE"/>
    <property type="match status" value="1"/>
</dbReference>
<dbReference type="SUPFAM" id="SSF64167">
    <property type="entry name" value="SurE-like"/>
    <property type="match status" value="1"/>
</dbReference>
<proteinExistence type="inferred from homology"/>
<protein>
    <recommendedName>
        <fullName evidence="1">5'-nucleotidase SurE</fullName>
        <ecNumber evidence="1">3.1.3.5</ecNumber>
    </recommendedName>
    <alternativeName>
        <fullName evidence="1">Nucleoside 5'-monophosphate phosphohydrolase</fullName>
    </alternativeName>
</protein>
<name>SURE_ANASK</name>